<gene>
    <name evidence="1" type="primary">msrA</name>
    <name type="ordered locus">YE0404</name>
</gene>
<reference key="1">
    <citation type="journal article" date="2006" name="PLoS Genet.">
        <title>The complete genome sequence and comparative genome analysis of the high pathogenicity Yersinia enterocolitica strain 8081.</title>
        <authorList>
            <person name="Thomson N.R."/>
            <person name="Howard S."/>
            <person name="Wren B.W."/>
            <person name="Holden M.T.G."/>
            <person name="Crossman L."/>
            <person name="Challis G.L."/>
            <person name="Churcher C."/>
            <person name="Mungall K."/>
            <person name="Brooks K."/>
            <person name="Chillingworth T."/>
            <person name="Feltwell T."/>
            <person name="Abdellah Z."/>
            <person name="Hauser H."/>
            <person name="Jagels K."/>
            <person name="Maddison M."/>
            <person name="Moule S."/>
            <person name="Sanders M."/>
            <person name="Whitehead S."/>
            <person name="Quail M.A."/>
            <person name="Dougan G."/>
            <person name="Parkhill J."/>
            <person name="Prentice M.B."/>
        </authorList>
    </citation>
    <scope>NUCLEOTIDE SEQUENCE [LARGE SCALE GENOMIC DNA]</scope>
    <source>
        <strain>NCTC 13174 / 8081</strain>
    </source>
</reference>
<proteinExistence type="inferred from homology"/>
<feature type="chain" id="PRO_1000068373" description="Peptide methionine sulfoxide reductase MsrA">
    <location>
        <begin position="1"/>
        <end position="212"/>
    </location>
</feature>
<feature type="active site" evidence="1">
    <location>
        <position position="52"/>
    </location>
</feature>
<sequence>MQNFDKTAVIDAANALPGRLTPMPVATLHVVNGHSMTHVPEGMEVAIFAMGCFWGVERLFWQQPGVYSTAAGYSGGYTPNPTYHEVCSGRTAHAEVVRVVFDPAIISYKQLLQIFWENHDPAQGMRQGGDVGTQYRSAIYVLTPEQETQAQESQALFQQAMTKAGDSRAITSEIAAALPFYYAEDDHQQYLYKNPQGYCGLGGIGVCMPPNL</sequence>
<evidence type="ECO:0000255" key="1">
    <source>
        <dbReference type="HAMAP-Rule" id="MF_01401"/>
    </source>
</evidence>
<name>MSRA_YERE8</name>
<keyword id="KW-0560">Oxidoreductase</keyword>
<accession>A1JIU0</accession>
<dbReference type="EC" id="1.8.4.11" evidence="1"/>
<dbReference type="EMBL" id="AM286415">
    <property type="protein sequence ID" value="CAL10531.1"/>
    <property type="molecule type" value="Genomic_DNA"/>
</dbReference>
<dbReference type="RefSeq" id="WP_005175425.1">
    <property type="nucleotide sequence ID" value="NC_008800.1"/>
</dbReference>
<dbReference type="RefSeq" id="YP_001004777.1">
    <property type="nucleotide sequence ID" value="NC_008800.1"/>
</dbReference>
<dbReference type="SMR" id="A1JIU0"/>
<dbReference type="KEGG" id="yen:YE0404"/>
<dbReference type="PATRIC" id="fig|393305.7.peg.499"/>
<dbReference type="eggNOG" id="COG0225">
    <property type="taxonomic scope" value="Bacteria"/>
</dbReference>
<dbReference type="HOGENOM" id="CLU_031040_10_3_6"/>
<dbReference type="OrthoDB" id="4174719at2"/>
<dbReference type="Proteomes" id="UP000000642">
    <property type="component" value="Chromosome"/>
</dbReference>
<dbReference type="GO" id="GO:0005737">
    <property type="term" value="C:cytoplasm"/>
    <property type="evidence" value="ECO:0007669"/>
    <property type="project" value="TreeGrafter"/>
</dbReference>
<dbReference type="GO" id="GO:0036456">
    <property type="term" value="F:L-methionine-(S)-S-oxide reductase activity"/>
    <property type="evidence" value="ECO:0007669"/>
    <property type="project" value="TreeGrafter"/>
</dbReference>
<dbReference type="GO" id="GO:0008113">
    <property type="term" value="F:peptide-methionine (S)-S-oxide reductase activity"/>
    <property type="evidence" value="ECO:0007669"/>
    <property type="project" value="UniProtKB-UniRule"/>
</dbReference>
<dbReference type="GO" id="GO:0034599">
    <property type="term" value="P:cellular response to oxidative stress"/>
    <property type="evidence" value="ECO:0007669"/>
    <property type="project" value="TreeGrafter"/>
</dbReference>
<dbReference type="GO" id="GO:0036211">
    <property type="term" value="P:protein modification process"/>
    <property type="evidence" value="ECO:0007669"/>
    <property type="project" value="UniProtKB-UniRule"/>
</dbReference>
<dbReference type="FunFam" id="3.30.1060.10:FF:000001">
    <property type="entry name" value="Peptide methionine sulfoxide reductase MsrA"/>
    <property type="match status" value="1"/>
</dbReference>
<dbReference type="Gene3D" id="3.30.1060.10">
    <property type="entry name" value="Peptide methionine sulphoxide reductase MsrA"/>
    <property type="match status" value="1"/>
</dbReference>
<dbReference type="HAMAP" id="MF_01401">
    <property type="entry name" value="MsrA"/>
    <property type="match status" value="1"/>
</dbReference>
<dbReference type="InterPro" id="IPR002569">
    <property type="entry name" value="Met_Sox_Rdtase_MsrA_dom"/>
</dbReference>
<dbReference type="InterPro" id="IPR036509">
    <property type="entry name" value="Met_Sox_Rdtase_MsrA_sf"/>
</dbReference>
<dbReference type="InterPro" id="IPR050162">
    <property type="entry name" value="MsrA_MetSO_reductase"/>
</dbReference>
<dbReference type="NCBIfam" id="TIGR00401">
    <property type="entry name" value="msrA"/>
    <property type="match status" value="1"/>
</dbReference>
<dbReference type="PANTHER" id="PTHR42799">
    <property type="entry name" value="MITOCHONDRIAL PEPTIDE METHIONINE SULFOXIDE REDUCTASE"/>
    <property type="match status" value="1"/>
</dbReference>
<dbReference type="PANTHER" id="PTHR42799:SF2">
    <property type="entry name" value="MITOCHONDRIAL PEPTIDE METHIONINE SULFOXIDE REDUCTASE"/>
    <property type="match status" value="1"/>
</dbReference>
<dbReference type="Pfam" id="PF01625">
    <property type="entry name" value="PMSR"/>
    <property type="match status" value="1"/>
</dbReference>
<dbReference type="SUPFAM" id="SSF55068">
    <property type="entry name" value="Peptide methionine sulfoxide reductase"/>
    <property type="match status" value="1"/>
</dbReference>
<protein>
    <recommendedName>
        <fullName evidence="1">Peptide methionine sulfoxide reductase MsrA</fullName>
        <shortName evidence="1">Protein-methionine-S-oxide reductase</shortName>
        <ecNumber evidence="1">1.8.4.11</ecNumber>
    </recommendedName>
    <alternativeName>
        <fullName evidence="1">Peptide-methionine (S)-S-oxide reductase</fullName>
        <shortName evidence="1">Peptide Met(O) reductase</shortName>
    </alternativeName>
</protein>
<organism>
    <name type="scientific">Yersinia enterocolitica serotype O:8 / biotype 1B (strain NCTC 13174 / 8081)</name>
    <dbReference type="NCBI Taxonomy" id="393305"/>
    <lineage>
        <taxon>Bacteria</taxon>
        <taxon>Pseudomonadati</taxon>
        <taxon>Pseudomonadota</taxon>
        <taxon>Gammaproteobacteria</taxon>
        <taxon>Enterobacterales</taxon>
        <taxon>Yersiniaceae</taxon>
        <taxon>Yersinia</taxon>
    </lineage>
</organism>
<comment type="function">
    <text evidence="1">Has an important function as a repair enzyme for proteins that have been inactivated by oxidation. Catalyzes the reversible oxidation-reduction of methionine sulfoxide in proteins to methionine.</text>
</comment>
<comment type="catalytic activity">
    <reaction evidence="1">
        <text>L-methionyl-[protein] + [thioredoxin]-disulfide + H2O = L-methionyl-(S)-S-oxide-[protein] + [thioredoxin]-dithiol</text>
        <dbReference type="Rhea" id="RHEA:14217"/>
        <dbReference type="Rhea" id="RHEA-COMP:10698"/>
        <dbReference type="Rhea" id="RHEA-COMP:10700"/>
        <dbReference type="Rhea" id="RHEA-COMP:12313"/>
        <dbReference type="Rhea" id="RHEA-COMP:12315"/>
        <dbReference type="ChEBI" id="CHEBI:15377"/>
        <dbReference type="ChEBI" id="CHEBI:16044"/>
        <dbReference type="ChEBI" id="CHEBI:29950"/>
        <dbReference type="ChEBI" id="CHEBI:44120"/>
        <dbReference type="ChEBI" id="CHEBI:50058"/>
        <dbReference type="EC" id="1.8.4.11"/>
    </reaction>
</comment>
<comment type="catalytic activity">
    <reaction evidence="1">
        <text>[thioredoxin]-disulfide + L-methionine + H2O = L-methionine (S)-S-oxide + [thioredoxin]-dithiol</text>
        <dbReference type="Rhea" id="RHEA:19993"/>
        <dbReference type="Rhea" id="RHEA-COMP:10698"/>
        <dbReference type="Rhea" id="RHEA-COMP:10700"/>
        <dbReference type="ChEBI" id="CHEBI:15377"/>
        <dbReference type="ChEBI" id="CHEBI:29950"/>
        <dbReference type="ChEBI" id="CHEBI:50058"/>
        <dbReference type="ChEBI" id="CHEBI:57844"/>
        <dbReference type="ChEBI" id="CHEBI:58772"/>
        <dbReference type="EC" id="1.8.4.11"/>
    </reaction>
</comment>
<comment type="similarity">
    <text evidence="1">Belongs to the MsrA Met sulfoxide reductase family.</text>
</comment>